<keyword id="KW-1185">Reference proteome</keyword>
<keyword id="KW-0687">Ribonucleoprotein</keyword>
<keyword id="KW-0689">Ribosomal protein</keyword>
<keyword id="KW-0694">RNA-binding</keyword>
<keyword id="KW-0699">rRNA-binding</keyword>
<feature type="chain" id="PRO_1000140682" description="Small ribosomal subunit protein uS4">
    <location>
        <begin position="1"/>
        <end position="197"/>
    </location>
</feature>
<feature type="domain" description="S4 RNA-binding" evidence="1">
    <location>
        <begin position="88"/>
        <end position="150"/>
    </location>
</feature>
<sequence>MARYIGPKTKIACRFGELIFGPDKAFSIRNSSSSRRKKKTSEYGIQLREKQKAKYIYGVLENQFRGFFEKASRSRGITGVVLLQLLESRLDNLVYRMGLAKTRAEARQLVSHKHITIDNNVVNIPSYLVKPGQIIGVRERAKSLEIILDNLIRANHNKYSWIEYDKSSMSARYLYIPERMDIPENIKEQLIVELYSK</sequence>
<comment type="function">
    <text evidence="1">One of the primary rRNA binding proteins, it binds directly to 16S rRNA where it nucleates assembly of the body of the 30S subunit.</text>
</comment>
<comment type="function">
    <text evidence="1">With S5 and S12 plays an important role in translational accuracy.</text>
</comment>
<comment type="subunit">
    <text evidence="1">Part of the 30S ribosomal subunit. Contacts protein S5. The interaction surface between S4 and S5 is involved in control of translational fidelity.</text>
</comment>
<comment type="similarity">
    <text evidence="1">Belongs to the universal ribosomal protein uS4 family.</text>
</comment>
<name>RS4_AZOPC</name>
<accession>B6YQ61</accession>
<protein>
    <recommendedName>
        <fullName evidence="1">Small ribosomal subunit protein uS4</fullName>
    </recommendedName>
    <alternativeName>
        <fullName evidence="2">30S ribosomal protein S4</fullName>
    </alternativeName>
</protein>
<proteinExistence type="inferred from homology"/>
<organism>
    <name type="scientific">Azobacteroides pseudotrichonymphae genomovar. CFP2</name>
    <dbReference type="NCBI Taxonomy" id="511995"/>
    <lineage>
        <taxon>Bacteria</taxon>
        <taxon>Pseudomonadati</taxon>
        <taxon>Bacteroidota</taxon>
        <taxon>Bacteroidia</taxon>
        <taxon>Bacteroidales</taxon>
        <taxon>Candidatus Azobacteroides</taxon>
    </lineage>
</organism>
<reference key="1">
    <citation type="journal article" date="2008" name="Science">
        <title>Genome of an endosymbiont coupling N2 fixation to cellulolysis within RT protist cells in termite gut.</title>
        <authorList>
            <person name="Hongoh Y."/>
            <person name="Sharma V.K."/>
            <person name="Prakash T."/>
            <person name="Noda S."/>
            <person name="Toh H."/>
            <person name="Taylor T.D."/>
            <person name="Kudo T."/>
            <person name="Sakaki Y."/>
            <person name="Toyoda A."/>
            <person name="Hattori M."/>
            <person name="Ohkuma M."/>
        </authorList>
    </citation>
    <scope>NUCLEOTIDE SEQUENCE [LARGE SCALE GENOMIC DNA]</scope>
</reference>
<gene>
    <name evidence="1" type="primary">rpsD</name>
    <name type="ordered locus">CFPG_070</name>
</gene>
<evidence type="ECO:0000255" key="1">
    <source>
        <dbReference type="HAMAP-Rule" id="MF_01306"/>
    </source>
</evidence>
<evidence type="ECO:0000305" key="2"/>
<dbReference type="EMBL" id="AP010656">
    <property type="protein sequence ID" value="BAG83333.1"/>
    <property type="molecule type" value="Genomic_DNA"/>
</dbReference>
<dbReference type="RefSeq" id="WP_012573094.1">
    <property type="nucleotide sequence ID" value="NC_011565.1"/>
</dbReference>
<dbReference type="SMR" id="B6YQ61"/>
<dbReference type="STRING" id="511995.CFPG_070"/>
<dbReference type="KEGG" id="aps:CFPG_070"/>
<dbReference type="eggNOG" id="COG0522">
    <property type="taxonomic scope" value="Bacteria"/>
</dbReference>
<dbReference type="HOGENOM" id="CLU_092403_1_0_10"/>
<dbReference type="OrthoDB" id="9803672at2"/>
<dbReference type="Proteomes" id="UP000000723">
    <property type="component" value="Chromosome"/>
</dbReference>
<dbReference type="GO" id="GO:0015935">
    <property type="term" value="C:small ribosomal subunit"/>
    <property type="evidence" value="ECO:0007669"/>
    <property type="project" value="InterPro"/>
</dbReference>
<dbReference type="GO" id="GO:0019843">
    <property type="term" value="F:rRNA binding"/>
    <property type="evidence" value="ECO:0007669"/>
    <property type="project" value="UniProtKB-UniRule"/>
</dbReference>
<dbReference type="GO" id="GO:0003735">
    <property type="term" value="F:structural constituent of ribosome"/>
    <property type="evidence" value="ECO:0007669"/>
    <property type="project" value="InterPro"/>
</dbReference>
<dbReference type="GO" id="GO:0042274">
    <property type="term" value="P:ribosomal small subunit biogenesis"/>
    <property type="evidence" value="ECO:0007669"/>
    <property type="project" value="TreeGrafter"/>
</dbReference>
<dbReference type="GO" id="GO:0006412">
    <property type="term" value="P:translation"/>
    <property type="evidence" value="ECO:0007669"/>
    <property type="project" value="UniProtKB-UniRule"/>
</dbReference>
<dbReference type="CDD" id="cd00165">
    <property type="entry name" value="S4"/>
    <property type="match status" value="1"/>
</dbReference>
<dbReference type="FunFam" id="3.10.290.10:FF:000001">
    <property type="entry name" value="30S ribosomal protein S4"/>
    <property type="match status" value="1"/>
</dbReference>
<dbReference type="Gene3D" id="1.10.1050.10">
    <property type="entry name" value="Ribosomal Protein S4 Delta 41, Chain A, domain 1"/>
    <property type="match status" value="1"/>
</dbReference>
<dbReference type="Gene3D" id="3.10.290.10">
    <property type="entry name" value="RNA-binding S4 domain"/>
    <property type="match status" value="1"/>
</dbReference>
<dbReference type="HAMAP" id="MF_01306_B">
    <property type="entry name" value="Ribosomal_uS4_B"/>
    <property type="match status" value="1"/>
</dbReference>
<dbReference type="InterPro" id="IPR022801">
    <property type="entry name" value="Ribosomal_uS4"/>
</dbReference>
<dbReference type="InterPro" id="IPR005709">
    <property type="entry name" value="Ribosomal_uS4_bac-type"/>
</dbReference>
<dbReference type="InterPro" id="IPR018079">
    <property type="entry name" value="Ribosomal_uS4_CS"/>
</dbReference>
<dbReference type="InterPro" id="IPR001912">
    <property type="entry name" value="Ribosomal_uS4_N"/>
</dbReference>
<dbReference type="InterPro" id="IPR002942">
    <property type="entry name" value="S4_RNA-bd"/>
</dbReference>
<dbReference type="InterPro" id="IPR036986">
    <property type="entry name" value="S4_RNA-bd_sf"/>
</dbReference>
<dbReference type="NCBIfam" id="NF003717">
    <property type="entry name" value="PRK05327.1"/>
    <property type="match status" value="1"/>
</dbReference>
<dbReference type="NCBIfam" id="TIGR01017">
    <property type="entry name" value="rpsD_bact"/>
    <property type="match status" value="1"/>
</dbReference>
<dbReference type="PANTHER" id="PTHR11831">
    <property type="entry name" value="30S 40S RIBOSOMAL PROTEIN"/>
    <property type="match status" value="1"/>
</dbReference>
<dbReference type="PANTHER" id="PTHR11831:SF4">
    <property type="entry name" value="SMALL RIBOSOMAL SUBUNIT PROTEIN US4M"/>
    <property type="match status" value="1"/>
</dbReference>
<dbReference type="Pfam" id="PF00163">
    <property type="entry name" value="Ribosomal_S4"/>
    <property type="match status" value="1"/>
</dbReference>
<dbReference type="Pfam" id="PF01479">
    <property type="entry name" value="S4"/>
    <property type="match status" value="1"/>
</dbReference>
<dbReference type="SMART" id="SM01390">
    <property type="entry name" value="Ribosomal_S4"/>
    <property type="match status" value="1"/>
</dbReference>
<dbReference type="SMART" id="SM00363">
    <property type="entry name" value="S4"/>
    <property type="match status" value="1"/>
</dbReference>
<dbReference type="SUPFAM" id="SSF55174">
    <property type="entry name" value="Alpha-L RNA-binding motif"/>
    <property type="match status" value="1"/>
</dbReference>
<dbReference type="PROSITE" id="PS00632">
    <property type="entry name" value="RIBOSOMAL_S4"/>
    <property type="match status" value="1"/>
</dbReference>
<dbReference type="PROSITE" id="PS50889">
    <property type="entry name" value="S4"/>
    <property type="match status" value="1"/>
</dbReference>